<name>PSAA_CHLAT</name>
<dbReference type="EC" id="1.97.1.12" evidence="1"/>
<dbReference type="EMBL" id="DQ422812">
    <property type="protein sequence ID" value="ABD62268.2"/>
    <property type="molecule type" value="Genomic_DNA"/>
</dbReference>
<dbReference type="RefSeq" id="YP_001019111.1">
    <property type="nucleotide sequence ID" value="NC_008822.1"/>
</dbReference>
<dbReference type="SMR" id="Q19V91"/>
<dbReference type="GeneID" id="4783313"/>
<dbReference type="GO" id="GO:0009535">
    <property type="term" value="C:chloroplast thylakoid membrane"/>
    <property type="evidence" value="ECO:0007669"/>
    <property type="project" value="UniProtKB-SubCell"/>
</dbReference>
<dbReference type="GO" id="GO:0009522">
    <property type="term" value="C:photosystem I"/>
    <property type="evidence" value="ECO:0007669"/>
    <property type="project" value="UniProtKB-KW"/>
</dbReference>
<dbReference type="GO" id="GO:0051539">
    <property type="term" value="F:4 iron, 4 sulfur cluster binding"/>
    <property type="evidence" value="ECO:0007669"/>
    <property type="project" value="UniProtKB-KW"/>
</dbReference>
<dbReference type="GO" id="GO:0016168">
    <property type="term" value="F:chlorophyll binding"/>
    <property type="evidence" value="ECO:0007669"/>
    <property type="project" value="UniProtKB-KW"/>
</dbReference>
<dbReference type="GO" id="GO:0009055">
    <property type="term" value="F:electron transfer activity"/>
    <property type="evidence" value="ECO:0007669"/>
    <property type="project" value="UniProtKB-UniRule"/>
</dbReference>
<dbReference type="GO" id="GO:0000287">
    <property type="term" value="F:magnesium ion binding"/>
    <property type="evidence" value="ECO:0007669"/>
    <property type="project" value="UniProtKB-UniRule"/>
</dbReference>
<dbReference type="GO" id="GO:0016491">
    <property type="term" value="F:oxidoreductase activity"/>
    <property type="evidence" value="ECO:0007669"/>
    <property type="project" value="UniProtKB-KW"/>
</dbReference>
<dbReference type="GO" id="GO:0015979">
    <property type="term" value="P:photosynthesis"/>
    <property type="evidence" value="ECO:0007669"/>
    <property type="project" value="UniProtKB-UniRule"/>
</dbReference>
<dbReference type="FunFam" id="1.20.1130.10:FF:000001">
    <property type="entry name" value="Photosystem I P700 chlorophyll a apoprotein A2"/>
    <property type="match status" value="1"/>
</dbReference>
<dbReference type="Gene3D" id="1.20.1130.10">
    <property type="entry name" value="Photosystem I PsaA/PsaB"/>
    <property type="match status" value="1"/>
</dbReference>
<dbReference type="HAMAP" id="MF_00458">
    <property type="entry name" value="PSI_PsaA"/>
    <property type="match status" value="1"/>
</dbReference>
<dbReference type="InterPro" id="IPR006243">
    <property type="entry name" value="PSI_PsaA"/>
</dbReference>
<dbReference type="InterPro" id="IPR001280">
    <property type="entry name" value="PSI_PsaA/B"/>
</dbReference>
<dbReference type="InterPro" id="IPR020586">
    <property type="entry name" value="PSI_PsaA/B_CS"/>
</dbReference>
<dbReference type="InterPro" id="IPR036408">
    <property type="entry name" value="PSI_PsaA/B_sf"/>
</dbReference>
<dbReference type="NCBIfam" id="TIGR01335">
    <property type="entry name" value="psaA"/>
    <property type="match status" value="1"/>
</dbReference>
<dbReference type="PANTHER" id="PTHR30128">
    <property type="entry name" value="OUTER MEMBRANE PROTEIN, OMPA-RELATED"/>
    <property type="match status" value="1"/>
</dbReference>
<dbReference type="PANTHER" id="PTHR30128:SF19">
    <property type="entry name" value="PHOTOSYSTEM I P700 CHLOROPHYLL A APOPROTEIN A1-RELATED"/>
    <property type="match status" value="1"/>
</dbReference>
<dbReference type="Pfam" id="PF00223">
    <property type="entry name" value="PsaA_PsaB"/>
    <property type="match status" value="1"/>
</dbReference>
<dbReference type="PIRSF" id="PIRSF002905">
    <property type="entry name" value="PSI_A"/>
    <property type="match status" value="1"/>
</dbReference>
<dbReference type="PRINTS" id="PR00257">
    <property type="entry name" value="PHOTSYSPSAAB"/>
</dbReference>
<dbReference type="SUPFAM" id="SSF81558">
    <property type="entry name" value="Photosystem I subunits PsaA/PsaB"/>
    <property type="match status" value="1"/>
</dbReference>
<dbReference type="PROSITE" id="PS00419">
    <property type="entry name" value="PHOTOSYSTEM_I_PSAAB"/>
    <property type="match status" value="1"/>
</dbReference>
<evidence type="ECO:0000255" key="1">
    <source>
        <dbReference type="HAMAP-Rule" id="MF_00458"/>
    </source>
</evidence>
<protein>
    <recommendedName>
        <fullName evidence="1">Photosystem I P700 chlorophyll a apoprotein A1</fullName>
        <ecNumber evidence="1">1.97.1.12</ecNumber>
    </recommendedName>
    <alternativeName>
        <fullName evidence="1">PSI-A</fullName>
    </alternativeName>
    <alternativeName>
        <fullName evidence="1">PsaA</fullName>
    </alternativeName>
</protein>
<sequence>MTISPPEQEASVKIVVDRDPVKTSFERWAKPGHFSRTLAKGPNTTTWIWNLHADAHDFDSHTNDLEDISRKVFSAHFGQLAVIFIWLSGMYFHGARFSNYEAWLSDPTHIKPSAQVVWPIVGQEILNGDVGGGFQGIQITSGFFQLWRASGITSELQLYSTAIGGLVMAGLMLFAGWFHYHKAAPKLEWFQNVESMLNHHLAGLLGLGSLSWAGHQIHVSLPINKLLDAGVDPKEIPLPHEFLVNRDLTAQLFPSFAKGLTPFFTLNWAEYSDFLTFKGGLNPVTGGLWLTDTAHHHLAIAVLFLVAGHMYRTNWGIGHSIKEILEAHKGPFTGAGHRGLYEILTTSWHAQLAINLALFGSLSIIVAHHMYAMPPYPYLATDYGTQLSIFTHHTWIGGFCIVGGAAHAAIFMVRDYDPTNNYNNLLDRVIRHRDAIISHLNWVCIFLGFHSFGLYIHNDTMSALGRPQDMFSDTAIQLQPVFAQWIQNTHYLAPNLTAPNALAPTSATWGGDVVAVGGKVAMMPISLGTADFLVHHIHAFTIHVTVLILLKGVLFARSSRLIPDKVNLGFRFPCDGPGRGGTCQVSAWDHVFLGLFWMYNSLSIAIFHFSWKMQSDVWGSVTAKGVSHITGGNFAQSSITINGWLRDFLWAQASQVIQSYGSALSAYGLMFLGAHFVWAFSLMFLFSGRGYWQELIESIVWAHNKLKVAPAIQPRALSIIQGRAVGVAHYLLGGIATTWAFFLARIIAVG</sequence>
<accession>Q19V91</accession>
<reference key="1">
    <citation type="journal article" date="2007" name="BMC Biol.">
        <title>A clade uniting the green algae Mesostigma viride and Chlorokybus atmophyticus represents the deepest branch of the Streptophyta in chloroplast genome-based phylogenies.</title>
        <authorList>
            <person name="Lemieux C."/>
            <person name="Otis C."/>
            <person name="Turmel M."/>
        </authorList>
    </citation>
    <scope>NUCLEOTIDE SEQUENCE [LARGE SCALE GENOMIC DNA]</scope>
    <source>
        <strain>SAG 48.80</strain>
    </source>
</reference>
<organism>
    <name type="scientific">Chlorokybus atmophyticus</name>
    <name type="common">Soil alga</name>
    <dbReference type="NCBI Taxonomy" id="3144"/>
    <lineage>
        <taxon>Eukaryota</taxon>
        <taxon>Viridiplantae</taxon>
        <taxon>Streptophyta</taxon>
        <taxon>Chlorokybophyceae</taxon>
        <taxon>Chlorokybales</taxon>
        <taxon>Chlorokybaceae</taxon>
        <taxon>Chlorokybus</taxon>
    </lineage>
</organism>
<feature type="chain" id="PRO_0000294219" description="Photosystem I P700 chlorophyll a apoprotein A1">
    <location>
        <begin position="1"/>
        <end position="750"/>
    </location>
</feature>
<feature type="transmembrane region" description="Helical; Name=I" evidence="1">
    <location>
        <begin position="72"/>
        <end position="95"/>
    </location>
</feature>
<feature type="transmembrane region" description="Helical; Name=II" evidence="1">
    <location>
        <begin position="158"/>
        <end position="181"/>
    </location>
</feature>
<feature type="transmembrane region" description="Helical; Name=III" evidence="1">
    <location>
        <begin position="197"/>
        <end position="221"/>
    </location>
</feature>
<feature type="transmembrane region" description="Helical; Name=IV" evidence="1">
    <location>
        <begin position="293"/>
        <end position="311"/>
    </location>
</feature>
<feature type="transmembrane region" description="Helical; Name=V" evidence="1">
    <location>
        <begin position="348"/>
        <end position="371"/>
    </location>
</feature>
<feature type="transmembrane region" description="Helical; Name=VI" evidence="1">
    <location>
        <begin position="387"/>
        <end position="413"/>
    </location>
</feature>
<feature type="transmembrane region" description="Helical; Name=VII" evidence="1">
    <location>
        <begin position="435"/>
        <end position="457"/>
    </location>
</feature>
<feature type="transmembrane region" description="Helical; Name=VIII" evidence="1">
    <location>
        <begin position="532"/>
        <end position="550"/>
    </location>
</feature>
<feature type="transmembrane region" description="Helical; Name=IX" evidence="1">
    <location>
        <begin position="590"/>
        <end position="611"/>
    </location>
</feature>
<feature type="transmembrane region" description="Helical; Name=X" evidence="1">
    <location>
        <begin position="664"/>
        <end position="686"/>
    </location>
</feature>
<feature type="transmembrane region" description="Helical; Name=XI" evidence="1">
    <location>
        <begin position="724"/>
        <end position="744"/>
    </location>
</feature>
<feature type="binding site" evidence="1">
    <location>
        <position position="574"/>
    </location>
    <ligand>
        <name>[4Fe-4S] cluster</name>
        <dbReference type="ChEBI" id="CHEBI:49883"/>
        <note>ligand shared between dimeric partners</note>
    </ligand>
</feature>
<feature type="binding site" evidence="1">
    <location>
        <position position="583"/>
    </location>
    <ligand>
        <name>[4Fe-4S] cluster</name>
        <dbReference type="ChEBI" id="CHEBI:49883"/>
        <note>ligand shared between dimeric partners</note>
    </ligand>
</feature>
<feature type="binding site" description="axial binding residue" evidence="1">
    <location>
        <position position="675"/>
    </location>
    <ligand>
        <name>chlorophyll a'</name>
        <dbReference type="ChEBI" id="CHEBI:189419"/>
        <label>A1</label>
    </ligand>
    <ligandPart>
        <name>Mg</name>
        <dbReference type="ChEBI" id="CHEBI:25107"/>
    </ligandPart>
</feature>
<feature type="binding site" description="axial binding residue" evidence="1">
    <location>
        <position position="683"/>
    </location>
    <ligand>
        <name>chlorophyll a</name>
        <dbReference type="ChEBI" id="CHEBI:58416"/>
        <label>A3</label>
    </ligand>
    <ligandPart>
        <name>Mg</name>
        <dbReference type="ChEBI" id="CHEBI:25107"/>
    </ligandPart>
</feature>
<feature type="binding site" evidence="1">
    <location>
        <position position="691"/>
    </location>
    <ligand>
        <name>chlorophyll a</name>
        <dbReference type="ChEBI" id="CHEBI:58416"/>
        <label>A3</label>
    </ligand>
</feature>
<feature type="binding site" evidence="1">
    <location>
        <position position="692"/>
    </location>
    <ligand>
        <name>phylloquinone</name>
        <dbReference type="ChEBI" id="CHEBI:18067"/>
        <label>A</label>
    </ligand>
</feature>
<gene>
    <name evidence="1" type="primary">psaA</name>
</gene>
<keyword id="KW-0004">4Fe-4S</keyword>
<keyword id="KW-0148">Chlorophyll</keyword>
<keyword id="KW-0150">Chloroplast</keyword>
<keyword id="KW-0157">Chromophore</keyword>
<keyword id="KW-0249">Electron transport</keyword>
<keyword id="KW-0408">Iron</keyword>
<keyword id="KW-0411">Iron-sulfur</keyword>
<keyword id="KW-0460">Magnesium</keyword>
<keyword id="KW-0472">Membrane</keyword>
<keyword id="KW-0479">Metal-binding</keyword>
<keyword id="KW-0560">Oxidoreductase</keyword>
<keyword id="KW-0602">Photosynthesis</keyword>
<keyword id="KW-0603">Photosystem I</keyword>
<keyword id="KW-0934">Plastid</keyword>
<keyword id="KW-0793">Thylakoid</keyword>
<keyword id="KW-0812">Transmembrane</keyword>
<keyword id="KW-1133">Transmembrane helix</keyword>
<keyword id="KW-0813">Transport</keyword>
<geneLocation type="chloroplast"/>
<comment type="function">
    <text>PsaA and PsaB bind P700, the primary electron donor of photosystem I (PSI), as well as the electron acceptors A0, A1 and FX. PSI is a plastocyanin-ferredoxin oxidoreductase, converting photonic excitation into a charge separation, which transfers an electron from the donor P700 chlorophyll pair to the spectroscopically characterized acceptors A0, A1, FX, FA and FB in turn. Oxidized P700 is reduced on the lumenal side of the thylakoid membrane by plastocyanin.</text>
</comment>
<comment type="catalytic activity">
    <reaction evidence="1">
        <text>reduced [plastocyanin] + hnu + oxidized [2Fe-2S]-[ferredoxin] = oxidized [plastocyanin] + reduced [2Fe-2S]-[ferredoxin]</text>
        <dbReference type="Rhea" id="RHEA:30407"/>
        <dbReference type="Rhea" id="RHEA-COMP:10000"/>
        <dbReference type="Rhea" id="RHEA-COMP:10001"/>
        <dbReference type="Rhea" id="RHEA-COMP:10039"/>
        <dbReference type="Rhea" id="RHEA-COMP:10040"/>
        <dbReference type="ChEBI" id="CHEBI:29036"/>
        <dbReference type="ChEBI" id="CHEBI:30212"/>
        <dbReference type="ChEBI" id="CHEBI:33737"/>
        <dbReference type="ChEBI" id="CHEBI:33738"/>
        <dbReference type="ChEBI" id="CHEBI:49552"/>
        <dbReference type="EC" id="1.97.1.12"/>
    </reaction>
</comment>
<comment type="cofactor">
    <text evidence="1">P700 is a chlorophyll a/chlorophyll a' dimer, A0 is one or more chlorophyll a, A1 is one or both phylloquinones and FX is a shared 4Fe-4S iron-sulfur center.</text>
</comment>
<comment type="subunit">
    <text evidence="1">The PsaA/B heterodimer binds the P700 chlorophyll special pair and subsequent electron acceptors. PSI consists of a core antenna complex that captures photons, and an electron transfer chain that converts photonic excitation into a charge separation. The eukaryotic PSI reaction center is composed of at least 11 subunits.</text>
</comment>
<comment type="subcellular location">
    <subcellularLocation>
        <location evidence="1">Plastid</location>
        <location evidence="1">Chloroplast thylakoid membrane</location>
        <topology evidence="1">Multi-pass membrane protein</topology>
    </subcellularLocation>
</comment>
<comment type="similarity">
    <text evidence="1">Belongs to the PsaA/PsaB family.</text>
</comment>
<proteinExistence type="inferred from homology"/>